<keyword id="KW-0067">ATP-binding</keyword>
<keyword id="KW-0436">Ligase</keyword>
<keyword id="KW-0547">Nucleotide-binding</keyword>
<keyword id="KW-0658">Purine biosynthesis</keyword>
<dbReference type="EC" id="6.3.2.6" evidence="1"/>
<dbReference type="EMBL" id="AB003161">
    <property type="protein sequence ID" value="BAA89448.1"/>
    <property type="molecule type" value="Genomic_DNA"/>
</dbReference>
<dbReference type="SMR" id="Q9RHX2"/>
<dbReference type="UniPathway" id="UPA00074">
    <property type="reaction ID" value="UER00131"/>
</dbReference>
<dbReference type="GO" id="GO:0005737">
    <property type="term" value="C:cytoplasm"/>
    <property type="evidence" value="ECO:0007669"/>
    <property type="project" value="TreeGrafter"/>
</dbReference>
<dbReference type="GO" id="GO:0005524">
    <property type="term" value="F:ATP binding"/>
    <property type="evidence" value="ECO:0007669"/>
    <property type="project" value="UniProtKB-KW"/>
</dbReference>
<dbReference type="GO" id="GO:0004639">
    <property type="term" value="F:phosphoribosylaminoimidazolesuccinocarboxamide synthase activity"/>
    <property type="evidence" value="ECO:0007669"/>
    <property type="project" value="UniProtKB-UniRule"/>
</dbReference>
<dbReference type="GO" id="GO:0006189">
    <property type="term" value="P:'de novo' IMP biosynthetic process"/>
    <property type="evidence" value="ECO:0007669"/>
    <property type="project" value="UniProtKB-UniRule"/>
</dbReference>
<dbReference type="CDD" id="cd01414">
    <property type="entry name" value="SAICAR_synt_Sc"/>
    <property type="match status" value="1"/>
</dbReference>
<dbReference type="FunFam" id="3.30.470.20:FF:000015">
    <property type="entry name" value="Phosphoribosylaminoimidazole-succinocarboxamide synthase"/>
    <property type="match status" value="1"/>
</dbReference>
<dbReference type="Gene3D" id="3.30.470.20">
    <property type="entry name" value="ATP-grasp fold, B domain"/>
    <property type="match status" value="1"/>
</dbReference>
<dbReference type="Gene3D" id="3.30.200.20">
    <property type="entry name" value="Phosphorylase Kinase, domain 1"/>
    <property type="match status" value="1"/>
</dbReference>
<dbReference type="HAMAP" id="MF_00137">
    <property type="entry name" value="SAICAR_synth"/>
    <property type="match status" value="1"/>
</dbReference>
<dbReference type="InterPro" id="IPR028923">
    <property type="entry name" value="SAICAR_synt/ADE2_N"/>
</dbReference>
<dbReference type="InterPro" id="IPR001636">
    <property type="entry name" value="SAICAR_synth"/>
</dbReference>
<dbReference type="InterPro" id="IPR018236">
    <property type="entry name" value="SAICAR_synthetase_CS"/>
</dbReference>
<dbReference type="NCBIfam" id="NF010568">
    <property type="entry name" value="PRK13961.1"/>
    <property type="match status" value="1"/>
</dbReference>
<dbReference type="NCBIfam" id="TIGR00081">
    <property type="entry name" value="purC"/>
    <property type="match status" value="1"/>
</dbReference>
<dbReference type="PANTHER" id="PTHR43700">
    <property type="entry name" value="PHOSPHORIBOSYLAMINOIMIDAZOLE-SUCCINOCARBOXAMIDE SYNTHASE"/>
    <property type="match status" value="1"/>
</dbReference>
<dbReference type="PANTHER" id="PTHR43700:SF1">
    <property type="entry name" value="PHOSPHORIBOSYLAMINOIMIDAZOLE-SUCCINOCARBOXAMIDE SYNTHASE"/>
    <property type="match status" value="1"/>
</dbReference>
<dbReference type="Pfam" id="PF01259">
    <property type="entry name" value="SAICAR_synt"/>
    <property type="match status" value="1"/>
</dbReference>
<dbReference type="SUPFAM" id="SSF56104">
    <property type="entry name" value="SAICAR synthase-like"/>
    <property type="match status" value="1"/>
</dbReference>
<dbReference type="PROSITE" id="PS01057">
    <property type="entry name" value="SAICAR_SYNTHETASE_1"/>
    <property type="match status" value="1"/>
</dbReference>
<dbReference type="PROSITE" id="PS01058">
    <property type="entry name" value="SAICAR_SYNTHETASE_2"/>
    <property type="match status" value="1"/>
</dbReference>
<organism>
    <name type="scientific">Corynebacterium ammoniagenes</name>
    <name type="common">Brevibacterium ammoniagenes</name>
    <dbReference type="NCBI Taxonomy" id="1697"/>
    <lineage>
        <taxon>Bacteria</taxon>
        <taxon>Bacillati</taxon>
        <taxon>Actinomycetota</taxon>
        <taxon>Actinomycetes</taxon>
        <taxon>Mycobacteriales</taxon>
        <taxon>Corynebacteriaceae</taxon>
        <taxon>Corynebacterium</taxon>
    </lineage>
</organism>
<proteinExistence type="inferred from homology"/>
<gene>
    <name evidence="1" type="primary">purC</name>
</gene>
<reference key="1">
    <citation type="submission" date="1997-04" db="EMBL/GenBank/DDBJ databases">
        <title>Sequence analysis of Corynebacterium ammoniagenes purD/B/C region.</title>
        <authorList>
            <person name="Yonetani Y."/>
            <person name="Teshiba S."/>
        </authorList>
    </citation>
    <scope>NUCLEOTIDE SEQUENCE [GENOMIC DNA]</scope>
    <source>
        <strain>ATCC 6872 / DSM 20305 / IAM 1645 / KCTC 1019 / NCTC 2399</strain>
    </source>
</reference>
<feature type="chain" id="PRO_0000100820" description="Phosphoribosylaminoimidazole-succinocarboxamide synthase">
    <location>
        <begin position="1"/>
        <end position="295"/>
    </location>
</feature>
<protein>
    <recommendedName>
        <fullName evidence="1">Phosphoribosylaminoimidazole-succinocarboxamide synthase</fullName>
        <ecNumber evidence="1">6.3.2.6</ecNumber>
    </recommendedName>
    <alternativeName>
        <fullName evidence="1">SAICAR synthetase</fullName>
    </alternativeName>
</protein>
<name>PUR7_CORAM</name>
<accession>Q9RHX2</accession>
<sequence length="295" mass="32947">MRPQLSDYQHVSSGKVRDIYEVDDNTLLMVVTDRISAYDFALEPAIPDKGRVLTATTMFFFDAIDFPNHLAGPIDDARIPEEVLGRAIIVKKLNMLPFECVARGYLTGSGLKEYNANGTVCGIELPEGLVEASRLPEPIFTPATKAEQGDHDENVSFERVVQDLGQERAEQLRDETLRIYSAAAKIAEEKGIILADTKFEFGLDSEGNLVLGDEVLTPDSSRYWPADTYAEGIVQPSFDKQYVRNWLTSEESGWDVESETQPPVLPDDIVAATRLRYIEAYERLSGKRFIDFIGG</sequence>
<evidence type="ECO:0000255" key="1">
    <source>
        <dbReference type="HAMAP-Rule" id="MF_00137"/>
    </source>
</evidence>
<comment type="catalytic activity">
    <reaction evidence="1">
        <text>5-amino-1-(5-phospho-D-ribosyl)imidazole-4-carboxylate + L-aspartate + ATP = (2S)-2-[5-amino-1-(5-phospho-beta-D-ribosyl)imidazole-4-carboxamido]succinate + ADP + phosphate + 2 H(+)</text>
        <dbReference type="Rhea" id="RHEA:22628"/>
        <dbReference type="ChEBI" id="CHEBI:15378"/>
        <dbReference type="ChEBI" id="CHEBI:29991"/>
        <dbReference type="ChEBI" id="CHEBI:30616"/>
        <dbReference type="ChEBI" id="CHEBI:43474"/>
        <dbReference type="ChEBI" id="CHEBI:58443"/>
        <dbReference type="ChEBI" id="CHEBI:77657"/>
        <dbReference type="ChEBI" id="CHEBI:456216"/>
        <dbReference type="EC" id="6.3.2.6"/>
    </reaction>
</comment>
<comment type="pathway">
    <text evidence="1">Purine metabolism; IMP biosynthesis via de novo pathway; 5-amino-1-(5-phospho-D-ribosyl)imidazole-4-carboxamide from 5-amino-1-(5-phospho-D-ribosyl)imidazole-4-carboxylate: step 1/2.</text>
</comment>
<comment type="similarity">
    <text evidence="1">Belongs to the SAICAR synthetase family.</text>
</comment>